<keyword id="KW-0223">Dioxygenase</keyword>
<keyword id="KW-0349">Heme</keyword>
<keyword id="KW-0408">Iron</keyword>
<keyword id="KW-0479">Metal-binding</keyword>
<keyword id="KW-0560">Oxidoreductase</keyword>
<keyword id="KW-1185">Reference proteome</keyword>
<keyword id="KW-0823">Tryptophan catabolism</keyword>
<reference key="1">
    <citation type="journal article" date="2006" name="Proc. Natl. Acad. Sci. U.S.A.">
        <title>Evolution of sensory complexity recorded in a myxobacterial genome.</title>
        <authorList>
            <person name="Goldman B.S."/>
            <person name="Nierman W.C."/>
            <person name="Kaiser D."/>
            <person name="Slater S.C."/>
            <person name="Durkin A.S."/>
            <person name="Eisen J.A."/>
            <person name="Ronning C.M."/>
            <person name="Barbazuk W.B."/>
            <person name="Blanchard M."/>
            <person name="Field C."/>
            <person name="Halling C."/>
            <person name="Hinkle G."/>
            <person name="Iartchuk O."/>
            <person name="Kim H.S."/>
            <person name="Mackenzie C."/>
            <person name="Madupu R."/>
            <person name="Miller N."/>
            <person name="Shvartsbeyn A."/>
            <person name="Sullivan S.A."/>
            <person name="Vaudin M."/>
            <person name="Wiegand R."/>
            <person name="Kaplan H.B."/>
        </authorList>
    </citation>
    <scope>NUCLEOTIDE SEQUENCE [LARGE SCALE GENOMIC DNA]</scope>
    <source>
        <strain>DK1622</strain>
    </source>
</reference>
<name>T23O_MYXXD</name>
<sequence>MPGPMNKRDLEPGIITDLAGRTTYGDYLQLDRLLSAQVTRSQPPHHDELLFIIQHQTSELWMKLLIHELGACIRYVQADRLEPSFKIFARVAHIQRMLFEQWSVLETLTPNEYLEFRDTLGSSSGFQSFQYRAVEFLLGNKDAQALMPFRHVPAIHGELERLFESPSLYDEFLRHLSRMGHPVPQSHVQRDWRKPYEKSPEVVEVFRRIYQDAEAHWDAYEMCEKLVDTEERFQLWRYRHMMTVMRIIGFKQGTGGSSGVGFLRKALDLRFFPELWDVRTELTPPPPRHRP</sequence>
<protein>
    <recommendedName>
        <fullName evidence="1">Tryptophan 2,3-dioxygenase</fullName>
        <shortName evidence="1">TDO</shortName>
        <ecNumber evidence="1">1.13.11.11</ecNumber>
    </recommendedName>
    <alternativeName>
        <fullName evidence="1">Tryptamin 2,3-dioxygenase</fullName>
    </alternativeName>
    <alternativeName>
        <fullName evidence="1">Tryptophan oxygenase</fullName>
        <shortName evidence="1">TO</shortName>
        <shortName evidence="1">TRPO</shortName>
    </alternativeName>
    <alternativeName>
        <fullName evidence="1">Tryptophan pyrrolase</fullName>
    </alternativeName>
    <alternativeName>
        <fullName evidence="1">Tryptophanase</fullName>
    </alternativeName>
</protein>
<organism>
    <name type="scientific">Myxococcus xanthus (strain DK1622)</name>
    <dbReference type="NCBI Taxonomy" id="246197"/>
    <lineage>
        <taxon>Bacteria</taxon>
        <taxon>Pseudomonadati</taxon>
        <taxon>Myxococcota</taxon>
        <taxon>Myxococcia</taxon>
        <taxon>Myxococcales</taxon>
        <taxon>Cystobacterineae</taxon>
        <taxon>Myxococcaceae</taxon>
        <taxon>Myxococcus</taxon>
    </lineage>
</organism>
<gene>
    <name evidence="1" type="primary">kynA</name>
    <name type="ordered locus">MXAN_7400</name>
</gene>
<comment type="function">
    <text evidence="1">Heme-dependent dioxygenase that catalyzes the oxidative cleavage of the L-tryptophan (L-Trp) pyrrole ring and converts L-tryptophan to N-formyl-L-kynurenine. Catalyzes the oxidative cleavage of the indole moiety.</text>
</comment>
<comment type="catalytic activity">
    <reaction evidence="1">
        <text>L-tryptophan + O2 = N-formyl-L-kynurenine</text>
        <dbReference type="Rhea" id="RHEA:24536"/>
        <dbReference type="ChEBI" id="CHEBI:15379"/>
        <dbReference type="ChEBI" id="CHEBI:57912"/>
        <dbReference type="ChEBI" id="CHEBI:58629"/>
        <dbReference type="EC" id="1.13.11.11"/>
    </reaction>
</comment>
<comment type="cofactor">
    <cofactor evidence="1">
        <name>heme</name>
        <dbReference type="ChEBI" id="CHEBI:30413"/>
    </cofactor>
    <text evidence="1">Binds 1 heme group per subunit.</text>
</comment>
<comment type="pathway">
    <text evidence="1">Amino-acid degradation; L-tryptophan degradation via kynurenine pathway; L-kynurenine from L-tryptophan: step 1/2.</text>
</comment>
<comment type="subunit">
    <text evidence="1">Homotetramer.</text>
</comment>
<comment type="similarity">
    <text evidence="1">Belongs to the tryptophan 2,3-dioxygenase family.</text>
</comment>
<accession>Q1CVR6</accession>
<dbReference type="EC" id="1.13.11.11" evidence="1"/>
<dbReference type="EMBL" id="CP000113">
    <property type="protein sequence ID" value="ABF86173.1"/>
    <property type="molecule type" value="Genomic_DNA"/>
</dbReference>
<dbReference type="SMR" id="Q1CVR6"/>
<dbReference type="STRING" id="246197.MXAN_7400"/>
<dbReference type="EnsemblBacteria" id="ABF86173">
    <property type="protein sequence ID" value="ABF86173"/>
    <property type="gene ID" value="MXAN_7400"/>
</dbReference>
<dbReference type="KEGG" id="mxa:MXAN_7400"/>
<dbReference type="eggNOG" id="COG3483">
    <property type="taxonomic scope" value="Bacteria"/>
</dbReference>
<dbReference type="HOGENOM" id="CLU_063240_0_0_7"/>
<dbReference type="OrthoDB" id="9776847at2"/>
<dbReference type="UniPathway" id="UPA00333">
    <property type="reaction ID" value="UER00453"/>
</dbReference>
<dbReference type="Proteomes" id="UP000002402">
    <property type="component" value="Chromosome"/>
</dbReference>
<dbReference type="GO" id="GO:0020037">
    <property type="term" value="F:heme binding"/>
    <property type="evidence" value="ECO:0000250"/>
    <property type="project" value="UniProtKB"/>
</dbReference>
<dbReference type="GO" id="GO:0046872">
    <property type="term" value="F:metal ion binding"/>
    <property type="evidence" value="ECO:0007669"/>
    <property type="project" value="UniProtKB-KW"/>
</dbReference>
<dbReference type="GO" id="GO:0004833">
    <property type="term" value="F:tryptophan 2,3-dioxygenase activity"/>
    <property type="evidence" value="ECO:0000250"/>
    <property type="project" value="UniProtKB"/>
</dbReference>
<dbReference type="GO" id="GO:0019442">
    <property type="term" value="P:L-tryptophan catabolic process to acetyl-CoA"/>
    <property type="evidence" value="ECO:0007669"/>
    <property type="project" value="TreeGrafter"/>
</dbReference>
<dbReference type="GO" id="GO:0019441">
    <property type="term" value="P:L-tryptophan catabolic process to kynurenine"/>
    <property type="evidence" value="ECO:0000250"/>
    <property type="project" value="UniProtKB"/>
</dbReference>
<dbReference type="FunFam" id="1.20.58.480:FF:000001">
    <property type="entry name" value="Tryptophan 2,3-dioxygenase"/>
    <property type="match status" value="1"/>
</dbReference>
<dbReference type="Gene3D" id="1.20.58.480">
    <property type="match status" value="1"/>
</dbReference>
<dbReference type="HAMAP" id="MF_01972">
    <property type="entry name" value="T23O"/>
    <property type="match status" value="1"/>
</dbReference>
<dbReference type="InterPro" id="IPR037217">
    <property type="entry name" value="Trp/Indoleamine_2_3_dOase-like"/>
</dbReference>
<dbReference type="InterPro" id="IPR004981">
    <property type="entry name" value="Trp_2_3_dOase"/>
</dbReference>
<dbReference type="PANTHER" id="PTHR10138">
    <property type="entry name" value="TRYPTOPHAN 2,3-DIOXYGENASE"/>
    <property type="match status" value="1"/>
</dbReference>
<dbReference type="PANTHER" id="PTHR10138:SF0">
    <property type="entry name" value="TRYPTOPHAN 2,3-DIOXYGENASE"/>
    <property type="match status" value="1"/>
</dbReference>
<dbReference type="Pfam" id="PF03301">
    <property type="entry name" value="Trp_dioxygenase"/>
    <property type="match status" value="2"/>
</dbReference>
<dbReference type="SUPFAM" id="SSF140959">
    <property type="entry name" value="Indolic compounds 2,3-dioxygenase-like"/>
    <property type="match status" value="1"/>
</dbReference>
<evidence type="ECO:0000255" key="1">
    <source>
        <dbReference type="HAMAP-Rule" id="MF_01972"/>
    </source>
</evidence>
<feature type="chain" id="PRO_0000360119" description="Tryptophan 2,3-dioxygenase">
    <location>
        <begin position="1"/>
        <end position="291"/>
    </location>
</feature>
<feature type="binding site" evidence="1">
    <location>
        <begin position="51"/>
        <end position="55"/>
    </location>
    <ligand>
        <name>substrate</name>
    </ligand>
</feature>
<feature type="binding site" evidence="1">
    <location>
        <position position="113"/>
    </location>
    <ligand>
        <name>substrate</name>
    </ligand>
</feature>
<feature type="binding site" evidence="1">
    <location>
        <position position="117"/>
    </location>
    <ligand>
        <name>substrate</name>
    </ligand>
</feature>
<feature type="binding site" description="axial binding residue" evidence="1">
    <location>
        <position position="240"/>
    </location>
    <ligand>
        <name>heme</name>
        <dbReference type="ChEBI" id="CHEBI:30413"/>
    </ligand>
    <ligandPart>
        <name>Fe</name>
        <dbReference type="ChEBI" id="CHEBI:18248"/>
    </ligandPart>
</feature>
<feature type="binding site" evidence="1">
    <location>
        <position position="254"/>
    </location>
    <ligand>
        <name>substrate</name>
    </ligand>
</feature>
<proteinExistence type="inferred from homology"/>